<comment type="function">
    <text evidence="1">Involved in de novo para-aminobenzoate (PABA) biosynthesis. Acts as a self-sacrificing or 'suicide' enzyme that utilizes its own active site tyrosine residue(s) as the substrate for PABA synthesis. The side chain of the tyrosine residue is released from the protein backbone via cleavage of the C(alpha)-C(beta) bond, leaving a glycine in place of the original tyrosine residue. Reaction requires O(2) and a reduced dimetal cofactor.</text>
</comment>
<comment type="cofactor">
    <cofactor evidence="1">
        <name>Fe(2+)</name>
        <dbReference type="ChEBI" id="CHEBI:29033"/>
    </cofactor>
    <cofactor evidence="1">
        <name>Mn(2+)</name>
        <dbReference type="ChEBI" id="CHEBI:29035"/>
    </cofactor>
    <text evidence="1">Binds 2 divalent metal cations per subunit.</text>
</comment>
<comment type="subunit">
    <text evidence="1">Homodimer.</text>
</comment>
<comment type="similarity">
    <text evidence="2">Belongs to the CADD family.</text>
</comment>
<comment type="sequence caution" evidence="2">
    <conflict type="erroneous initiation">
        <sequence resource="EMBL-CDS" id="AAP98718"/>
    </conflict>
</comment>
<protein>
    <recommendedName>
        <fullName evidence="1">4-aminobenzoate synthase</fullName>
        <ecNumber evidence="1">1.3.3.-</ecNumber>
    </recommendedName>
    <alternativeName>
        <fullName evidence="1">para-aminobenzoate synthase</fullName>
        <shortName evidence="1">PABA synthase</shortName>
    </alternativeName>
</protein>
<proteinExistence type="inferred from homology"/>
<feature type="chain" id="PRO_0000219993" description="4-aminobenzoate synthase">
    <location>
        <begin position="1"/>
        <end position="224"/>
    </location>
</feature>
<feature type="binding site" evidence="1">
    <location>
        <position position="77"/>
    </location>
    <ligand>
        <name>Fe(2+)</name>
        <dbReference type="ChEBI" id="CHEBI:29033"/>
        <label>1</label>
    </ligand>
</feature>
<feature type="binding site" evidence="1">
    <location>
        <position position="77"/>
    </location>
    <ligand>
        <name>Fe(2+)</name>
        <dbReference type="ChEBI" id="CHEBI:29033"/>
        <label>2</label>
    </ligand>
</feature>
<feature type="binding site" evidence="1">
    <location>
        <position position="84"/>
    </location>
    <ligand>
        <name>Fe(2+)</name>
        <dbReference type="ChEBI" id="CHEBI:29033"/>
        <label>1</label>
    </ligand>
</feature>
<feature type="binding site" evidence="1">
    <location>
        <position position="138"/>
    </location>
    <ligand>
        <name>Fe(2+)</name>
        <dbReference type="ChEBI" id="CHEBI:29033"/>
        <label>2</label>
    </ligand>
</feature>
<feature type="binding site" evidence="1">
    <location>
        <position position="169"/>
    </location>
    <ligand>
        <name>Fe(2+)</name>
        <dbReference type="ChEBI" id="CHEBI:29033"/>
        <label>1</label>
    </ligand>
</feature>
<feature type="binding site" evidence="1">
    <location>
        <position position="173"/>
    </location>
    <ligand>
        <name>Fe(2+)</name>
        <dbReference type="ChEBI" id="CHEBI:29033"/>
        <label>2</label>
    </ligand>
</feature>
<feature type="binding site" evidence="1">
    <location>
        <position position="176"/>
    </location>
    <ligand>
        <name>Fe(2+)</name>
        <dbReference type="ChEBI" id="CHEBI:29033"/>
        <label>2</label>
    </ligand>
</feature>
<feature type="site" description="Side-chain cleavage" evidence="1">
    <location>
        <position position="23"/>
    </location>
</feature>
<organism>
    <name type="scientific">Chlamydia pneumoniae</name>
    <name type="common">Chlamydophila pneumoniae</name>
    <dbReference type="NCBI Taxonomy" id="83558"/>
    <lineage>
        <taxon>Bacteria</taxon>
        <taxon>Pseudomonadati</taxon>
        <taxon>Chlamydiota</taxon>
        <taxon>Chlamydiia</taxon>
        <taxon>Chlamydiales</taxon>
        <taxon>Chlamydiaceae</taxon>
        <taxon>Chlamydia/Chlamydophila group</taxon>
        <taxon>Chlamydia</taxon>
    </lineage>
</organism>
<reference key="1">
    <citation type="journal article" date="1999" name="Nat. Genet.">
        <title>Comparative genomes of Chlamydia pneumoniae and C. trachomatis.</title>
        <authorList>
            <person name="Kalman S."/>
            <person name="Mitchell W.P."/>
            <person name="Marathe R."/>
            <person name="Lammel C.J."/>
            <person name="Fan J."/>
            <person name="Hyman R.W."/>
            <person name="Olinger L."/>
            <person name="Grimwood J."/>
            <person name="Davis R.W."/>
            <person name="Stephens R.S."/>
        </authorList>
    </citation>
    <scope>NUCLEOTIDE SEQUENCE [LARGE SCALE GENOMIC DNA]</scope>
    <source>
        <strain>CWL029</strain>
    </source>
</reference>
<reference key="2">
    <citation type="journal article" date="2000" name="Nucleic Acids Res.">
        <title>Genome sequences of Chlamydia trachomatis MoPn and Chlamydia pneumoniae AR39.</title>
        <authorList>
            <person name="Read T.D."/>
            <person name="Brunham R.C."/>
            <person name="Shen C."/>
            <person name="Gill S.R."/>
            <person name="Heidelberg J.F."/>
            <person name="White O."/>
            <person name="Hickey E.K."/>
            <person name="Peterson J.D."/>
            <person name="Utterback T.R."/>
            <person name="Berry K.J."/>
            <person name="Bass S."/>
            <person name="Linher K.D."/>
            <person name="Weidman J.F."/>
            <person name="Khouri H.M."/>
            <person name="Craven B."/>
            <person name="Bowman C."/>
            <person name="Dodson R.J."/>
            <person name="Gwinn M.L."/>
            <person name="Nelson W.C."/>
            <person name="DeBoy R.T."/>
            <person name="Kolonay J.F."/>
            <person name="McClarty G."/>
            <person name="Salzberg S.L."/>
            <person name="Eisen J.A."/>
            <person name="Fraser C.M."/>
        </authorList>
    </citation>
    <scope>NUCLEOTIDE SEQUENCE [LARGE SCALE GENOMIC DNA]</scope>
    <source>
        <strain>AR39</strain>
    </source>
</reference>
<reference key="3">
    <citation type="journal article" date="2000" name="Nucleic Acids Res.">
        <title>Comparison of whole genome sequences of Chlamydia pneumoniae J138 from Japan and CWL029 from USA.</title>
        <authorList>
            <person name="Shirai M."/>
            <person name="Hirakawa H."/>
            <person name="Kimoto M."/>
            <person name="Tabuchi M."/>
            <person name="Kishi F."/>
            <person name="Ouchi K."/>
            <person name="Shiba T."/>
            <person name="Ishii K."/>
            <person name="Hattori M."/>
            <person name="Kuhara S."/>
            <person name="Nakazawa T."/>
        </authorList>
    </citation>
    <scope>NUCLEOTIDE SEQUENCE [LARGE SCALE GENOMIC DNA]</scope>
    <source>
        <strain>J138</strain>
    </source>
</reference>
<reference key="4">
    <citation type="submission" date="2002-05" db="EMBL/GenBank/DDBJ databases">
        <title>The genome sequence of Chlamydia pneumoniae TW183 and comparison with other Chlamydia strains based on whole genome sequence analysis.</title>
        <authorList>
            <person name="Geng M.M."/>
            <person name="Schuhmacher A."/>
            <person name="Muehldorfer I."/>
            <person name="Bensch K.W."/>
            <person name="Schaefer K.P."/>
            <person name="Schneider S."/>
            <person name="Pohl T."/>
            <person name="Essig A."/>
            <person name="Marre R."/>
            <person name="Melchers K."/>
        </authorList>
    </citation>
    <scope>NUCLEOTIDE SEQUENCE [LARGE SCALE GENOMIC DNA]</scope>
    <source>
        <strain>TW-183</strain>
    </source>
</reference>
<keyword id="KW-0408">Iron</keyword>
<keyword id="KW-0479">Metal-binding</keyword>
<keyword id="KW-0560">Oxidoreductase</keyword>
<name>CADD_CHLPN</name>
<accession>Q9Z7E5</accession>
<gene>
    <name type="ordered locus">CPn_0761</name>
    <name type="ordered locus">CP_1111</name>
    <name type="ordered locus">CPj0761</name>
    <name type="ordered locus">CpB0789</name>
</gene>
<dbReference type="EC" id="1.3.3.-" evidence="1"/>
<dbReference type="EMBL" id="AE001363">
    <property type="protein sequence ID" value="AAD18899.1"/>
    <property type="molecule type" value="Genomic_DNA"/>
</dbReference>
<dbReference type="EMBL" id="AE002161">
    <property type="protein sequence ID" value="AAF38878.1"/>
    <property type="molecule type" value="Genomic_DNA"/>
</dbReference>
<dbReference type="EMBL" id="BA000008">
    <property type="protein sequence ID" value="BAA98969.1"/>
    <property type="molecule type" value="Genomic_DNA"/>
</dbReference>
<dbReference type="EMBL" id="AE009440">
    <property type="protein sequence ID" value="AAP98718.1"/>
    <property type="status" value="ALT_INIT"/>
    <property type="molecule type" value="Genomic_DNA"/>
</dbReference>
<dbReference type="PIR" id="B72040">
    <property type="entry name" value="B72040"/>
</dbReference>
<dbReference type="PIR" id="G86585">
    <property type="entry name" value="G86585"/>
</dbReference>
<dbReference type="RefSeq" id="NP_224956.1">
    <property type="nucleotide sequence ID" value="NC_000922.1"/>
</dbReference>
<dbReference type="RefSeq" id="WP_010883398.1">
    <property type="nucleotide sequence ID" value="NZ_LN847257.1"/>
</dbReference>
<dbReference type="SMR" id="Q9Z7E5"/>
<dbReference type="STRING" id="406984.CPK_ORF00167"/>
<dbReference type="GeneID" id="45050816"/>
<dbReference type="KEGG" id="cpa:CP_1111"/>
<dbReference type="KEGG" id="cpj:CPj0761"/>
<dbReference type="KEGG" id="cpn:CPn_0761"/>
<dbReference type="KEGG" id="cpt:CpB0789"/>
<dbReference type="PATRIC" id="fig|115713.3.peg.838"/>
<dbReference type="eggNOG" id="COG5424">
    <property type="taxonomic scope" value="Bacteria"/>
</dbReference>
<dbReference type="HOGENOM" id="CLU_088144_0_0_0"/>
<dbReference type="OrthoDB" id="9800756at2"/>
<dbReference type="Proteomes" id="UP000000583">
    <property type="component" value="Chromosome"/>
</dbReference>
<dbReference type="Proteomes" id="UP000000801">
    <property type="component" value="Chromosome"/>
</dbReference>
<dbReference type="GO" id="GO:0046872">
    <property type="term" value="F:metal ion binding"/>
    <property type="evidence" value="ECO:0007669"/>
    <property type="project" value="UniProtKB-KW"/>
</dbReference>
<dbReference type="GO" id="GO:0016491">
    <property type="term" value="F:oxidoreductase activity"/>
    <property type="evidence" value="ECO:0007669"/>
    <property type="project" value="UniProtKB-KW"/>
</dbReference>
<dbReference type="GO" id="GO:0044281">
    <property type="term" value="P:small molecule metabolic process"/>
    <property type="evidence" value="ECO:0007669"/>
    <property type="project" value="UniProtKB-ARBA"/>
</dbReference>
<dbReference type="GO" id="GO:0006790">
    <property type="term" value="P:sulfur compound metabolic process"/>
    <property type="evidence" value="ECO:0007669"/>
    <property type="project" value="UniProtKB-ARBA"/>
</dbReference>
<dbReference type="Gene3D" id="1.20.910.10">
    <property type="entry name" value="Heme oxygenase-like"/>
    <property type="match status" value="1"/>
</dbReference>
<dbReference type="InterPro" id="IPR027572">
    <property type="entry name" value="Fol-rel_CADD"/>
</dbReference>
<dbReference type="InterPro" id="IPR016084">
    <property type="entry name" value="Haem_Oase-like_multi-hlx"/>
</dbReference>
<dbReference type="InterPro" id="IPR039068">
    <property type="entry name" value="PqqC-like"/>
</dbReference>
<dbReference type="InterPro" id="IPR004305">
    <property type="entry name" value="Thiaminase-2/PQQC"/>
</dbReference>
<dbReference type="NCBIfam" id="TIGR04305">
    <property type="entry name" value="fol_rel_CADD"/>
    <property type="match status" value="1"/>
</dbReference>
<dbReference type="PANTHER" id="PTHR40279:SF3">
    <property type="entry name" value="4-AMINOBENZOATE SYNTHASE"/>
    <property type="match status" value="1"/>
</dbReference>
<dbReference type="PANTHER" id="PTHR40279">
    <property type="entry name" value="PQQC-LIKE PROTEIN"/>
    <property type="match status" value="1"/>
</dbReference>
<dbReference type="Pfam" id="PF03070">
    <property type="entry name" value="TENA_THI-4"/>
    <property type="match status" value="1"/>
</dbReference>
<dbReference type="SMART" id="SM01236">
    <property type="entry name" value="Haem_oxygenase_2"/>
    <property type="match status" value="1"/>
</dbReference>
<dbReference type="SUPFAM" id="SSF48613">
    <property type="entry name" value="Heme oxygenase-like"/>
    <property type="match status" value="1"/>
</dbReference>
<sequence>MTSWIELLDKQIEDQHMLKHEFYQRWSEGKLEKQQLQAYAKDYYLHIKAFPCYLSALHARCDDLQIRRQILENLMDEEAGNPNHIDLWRQFALSLGVSEEELANHEFSQAAQDMVATFRRLCDMPQLAVGLGALYTYEIQIPQVCVEKIRGLKEYFGVSARGYAYFTVHQEADIKHASEEKEMLQTLVGRENPDAVLQGSQEVLDTLWNFLSSFINSTEPCSCK</sequence>
<evidence type="ECO:0000250" key="1">
    <source>
        <dbReference type="UniProtKB" id="O84616"/>
    </source>
</evidence>
<evidence type="ECO:0000305" key="2"/>